<feature type="chain" id="PRO_0000077882" description="Probable ribonuclease HepT">
    <location>
        <begin position="1"/>
        <end position="146"/>
    </location>
</feature>
<feature type="short sequence motif" description="RX(4)HXY motif" evidence="6">
    <location>
        <begin position="106"/>
        <end position="113"/>
    </location>
</feature>
<feature type="active site" evidence="1">
    <location>
        <position position="106"/>
    </location>
</feature>
<feature type="active site" evidence="1">
    <location>
        <position position="111"/>
    </location>
</feature>
<feature type="modified residue" description="O-di-AMP-tyrosine" evidence="1">
    <location>
        <position position="113"/>
    </location>
</feature>
<feature type="helix" evidence="8">
    <location>
        <begin position="8"/>
        <end position="26"/>
    </location>
</feature>
<feature type="helix" evidence="8">
    <location>
        <begin position="28"/>
        <end position="31"/>
    </location>
</feature>
<feature type="helix" evidence="8">
    <location>
        <begin position="36"/>
        <end position="68"/>
    </location>
</feature>
<feature type="helix" evidence="8">
    <location>
        <begin position="80"/>
        <end position="89"/>
    </location>
</feature>
<feature type="helix" evidence="8">
    <location>
        <begin position="96"/>
        <end position="106"/>
    </location>
</feature>
<feature type="helix" evidence="8">
    <location>
        <begin position="107"/>
        <end position="111"/>
    </location>
</feature>
<feature type="helix" evidence="8">
    <location>
        <begin position="115"/>
        <end position="123"/>
    </location>
</feature>
<feature type="helix" evidence="8">
    <location>
        <begin position="125"/>
        <end position="140"/>
    </location>
</feature>
<sequence>MMTDKLNLNVLDAAFYSLEQTVVQISDRNWFDMQPSIVQDTLIAGAIQKFEFVYELSLKMMKRQLQQDAINTDDIGAYGFKDILREALRFGLIGDMSKWVAYRDMRNITSHTYDQEKAMAVYAQIDDFLIESSFLLEQLRQRNQYD</sequence>
<organism>
    <name type="scientific">Haemophilus influenzae (strain ATCC 51907 / DSM 11121 / KW20 / Rd)</name>
    <dbReference type="NCBI Taxonomy" id="71421"/>
    <lineage>
        <taxon>Bacteria</taxon>
        <taxon>Pseudomonadati</taxon>
        <taxon>Pseudomonadota</taxon>
        <taxon>Gammaproteobacteria</taxon>
        <taxon>Pasteurellales</taxon>
        <taxon>Pasteurellaceae</taxon>
        <taxon>Haemophilus</taxon>
    </lineage>
</organism>
<reference key="1">
    <citation type="journal article" date="1995" name="Science">
        <title>Whole-genome random sequencing and assembly of Haemophilus influenzae Rd.</title>
        <authorList>
            <person name="Fleischmann R.D."/>
            <person name="Adams M.D."/>
            <person name="White O."/>
            <person name="Clayton R.A."/>
            <person name="Kirkness E.F."/>
            <person name="Kerlavage A.R."/>
            <person name="Bult C.J."/>
            <person name="Tomb J.-F."/>
            <person name="Dougherty B.A."/>
            <person name="Merrick J.M."/>
            <person name="McKenney K."/>
            <person name="Sutton G.G."/>
            <person name="FitzHugh W."/>
            <person name="Fields C.A."/>
            <person name="Gocayne J.D."/>
            <person name="Scott J.D."/>
            <person name="Shirley R."/>
            <person name="Liu L.-I."/>
            <person name="Glodek A."/>
            <person name="Kelley J.M."/>
            <person name="Weidman J.F."/>
            <person name="Phillips C.A."/>
            <person name="Spriggs T."/>
            <person name="Hedblom E."/>
            <person name="Cotton M.D."/>
            <person name="Utterback T.R."/>
            <person name="Hanna M.C."/>
            <person name="Nguyen D.T."/>
            <person name="Saudek D.M."/>
            <person name="Brandon R.C."/>
            <person name="Fine L.D."/>
            <person name="Fritchman J.L."/>
            <person name="Fuhrmann J.L."/>
            <person name="Geoghagen N.S.M."/>
            <person name="Gnehm C.L."/>
            <person name="McDonald L.A."/>
            <person name="Small K.V."/>
            <person name="Fraser C.M."/>
            <person name="Smith H.O."/>
            <person name="Venter J.C."/>
        </authorList>
    </citation>
    <scope>NUCLEOTIDE SEQUENCE [LARGE SCALE GENOMIC DNA]</scope>
    <source>
        <strain>ATCC 51907 / DSM 11121 / KW20 / Rd</strain>
    </source>
</reference>
<reference key="2">
    <citation type="journal article" date="2005" name="Proteins">
        <title>Structure of HI0073 from Haemophilus influenzae, the nucleotide-binding domain of a two-protein nucleotidyl transferase.</title>
        <authorList>
            <person name="Lehmann C."/>
            <person name="Pullalarevu S."/>
            <person name="Krajewski W."/>
            <person name="Willis M.A."/>
            <person name="Galkin A."/>
            <person name="Howard A."/>
            <person name="Herzberg O."/>
        </authorList>
    </citation>
    <scope>POSSIBLE NUCLEOTIDE-BINDING</scope>
    <source>
        <strain>ATCC 51907 / DSM 11121 / KW20 / Rd</strain>
    </source>
</reference>
<reference key="3">
    <citation type="journal article" date="2018" name="J. Biol. Chem.">
        <title>Structure-function analyses reveal the molecular architecture and neutralization mechanism of a bacterial HEPN-MNT toxin-antitoxin system.</title>
        <authorList>
            <person name="Jia X."/>
            <person name="Yao J."/>
            <person name="Gao Z."/>
            <person name="Liu G."/>
            <person name="Dong Y.H."/>
            <person name="Wang X."/>
            <person name="Zhang H."/>
        </authorList>
    </citation>
    <scope>POSSIBLE FUNCTION</scope>
</reference>
<reference evidence="7" key="4">
    <citation type="journal article" date="2003" name="Proteins">
        <title>The HI0073/HI0074 protein pair from Haemophilus influenzae is a member of a new nucleotidyltransferase family: structure, sequence analyses, and solution studies.</title>
        <authorList>
            <person name="Lehmann C."/>
            <person name="Lim K."/>
            <person name="Chalamasetty V.R."/>
            <person name="Krajewski W."/>
            <person name="Melamud E."/>
            <person name="Galkin A."/>
            <person name="Howard A."/>
            <person name="Kelman Z."/>
            <person name="Reddy P.T."/>
            <person name="Murzin A.G."/>
            <person name="Herzberg O."/>
        </authorList>
    </citation>
    <scope>X-RAY CRYSTALLOGRAPHY (2.40 ANGSTROMS)</scope>
    <scope>SUBUNIT</scope>
    <source>
        <strain>ATCC 51907 / DSM 11121 / KW20 / Rd</strain>
    </source>
</reference>
<keyword id="KW-0002">3D-structure</keyword>
<keyword id="KW-0255">Endonuclease</keyword>
<keyword id="KW-0378">Hydrolase</keyword>
<keyword id="KW-0540">Nuclease</keyword>
<keyword id="KW-0547">Nucleotide-binding</keyword>
<keyword id="KW-0597">Phosphoprotein</keyword>
<keyword id="KW-1185">Reference proteome</keyword>
<keyword id="KW-1277">Toxin-antitoxin system</keyword>
<gene>
    <name type="primary">hepT</name>
    <name type="ordered locus">HI_0074</name>
</gene>
<accession>P43934</accession>
<proteinExistence type="evidence at protein level"/>
<evidence type="ECO:0000250" key="1">
    <source>
        <dbReference type="UniProtKB" id="A0A0B0QJR1"/>
    </source>
</evidence>
<evidence type="ECO:0000250" key="2">
    <source>
        <dbReference type="UniProtKB" id="Q8ECH6"/>
    </source>
</evidence>
<evidence type="ECO:0000269" key="3">
    <source>
    </source>
</evidence>
<evidence type="ECO:0000269" key="4">
    <source>
    </source>
</evidence>
<evidence type="ECO:0000305" key="5"/>
<evidence type="ECO:0000305" key="6">
    <source>
    </source>
</evidence>
<evidence type="ECO:0007744" key="7">
    <source>
        <dbReference type="PDB" id="1JOG"/>
    </source>
</evidence>
<evidence type="ECO:0007829" key="8">
    <source>
        <dbReference type="PDB" id="1JOG"/>
    </source>
</evidence>
<protein>
    <recommendedName>
        <fullName>Probable ribonuclease HepT</fullName>
        <ecNumber evidence="2">3.1.-.-</ecNumber>
    </recommendedName>
    <alternativeName>
        <fullName>Probable toxin HepT</fullName>
    </alternativeName>
</protein>
<comment type="function">
    <text evidence="4 6">Probable toxic component of a type VII toxin-antitoxin (TA) system, probably an RNase. Neutralized by cognate antitoxin MntA. Neutralization is probably due to AMPylation by MntA (Probable). A mixture of HepT and MntA binds nucleotides; the highest affinity is for TTP, ATP binds more tightly than ADP or AMP (PubMed:16028221).</text>
</comment>
<comment type="subunit">
    <text evidence="3">Homodimer. Forms a complex with MntA, probably with a stoichiometry of 2:2.</text>
</comment>
<comment type="PTM">
    <text evidence="1">Modified by cognate antitoxin MntA; probably at least 2 successive AMPylation events occur on Tyr-113.</text>
</comment>
<comment type="similarity">
    <text evidence="5">Belongs to the HepT RNase toxin family.</text>
</comment>
<name>HEPT_HAEIN</name>
<dbReference type="EC" id="3.1.-.-" evidence="2"/>
<dbReference type="EMBL" id="L42023">
    <property type="protein sequence ID" value="AAC21759.1"/>
    <property type="molecule type" value="Genomic_DNA"/>
</dbReference>
<dbReference type="PIR" id="F64000">
    <property type="entry name" value="F64000"/>
</dbReference>
<dbReference type="RefSeq" id="NP_438247.1">
    <property type="nucleotide sequence ID" value="NC_000907.1"/>
</dbReference>
<dbReference type="PDB" id="1JOG">
    <property type="method" value="X-ray"/>
    <property type="resolution" value="2.40 A"/>
    <property type="chains" value="A/B/C/D=1-146"/>
</dbReference>
<dbReference type="PDBsum" id="1JOG"/>
<dbReference type="SMR" id="P43934"/>
<dbReference type="STRING" id="71421.HI_0074"/>
<dbReference type="EnsemblBacteria" id="AAC21759">
    <property type="protein sequence ID" value="AAC21759"/>
    <property type="gene ID" value="HI_0074"/>
</dbReference>
<dbReference type="KEGG" id="hin:HI_0074"/>
<dbReference type="PATRIC" id="fig|71421.8.peg.75"/>
<dbReference type="eggNOG" id="COG1708">
    <property type="taxonomic scope" value="Bacteria"/>
</dbReference>
<dbReference type="HOGENOM" id="CLU_118479_0_0_6"/>
<dbReference type="OrthoDB" id="9810452at2"/>
<dbReference type="PhylomeDB" id="P43934"/>
<dbReference type="BioCyc" id="HINF71421:G1GJ1-75-MONOMER"/>
<dbReference type="EvolutionaryTrace" id="P43934"/>
<dbReference type="Proteomes" id="UP000000579">
    <property type="component" value="Chromosome"/>
</dbReference>
<dbReference type="GO" id="GO:0004519">
    <property type="term" value="F:endonuclease activity"/>
    <property type="evidence" value="ECO:0007669"/>
    <property type="project" value="UniProtKB-KW"/>
</dbReference>
<dbReference type="GO" id="GO:0000166">
    <property type="term" value="F:nucleotide binding"/>
    <property type="evidence" value="ECO:0007669"/>
    <property type="project" value="UniProtKB-KW"/>
</dbReference>
<dbReference type="Gene3D" id="1.20.120.330">
    <property type="entry name" value="Nucleotidyltransferases domain 2"/>
    <property type="match status" value="1"/>
</dbReference>
<dbReference type="InterPro" id="IPR010235">
    <property type="entry name" value="HepT"/>
</dbReference>
<dbReference type="NCBIfam" id="TIGR01987">
    <property type="entry name" value="HI0074"/>
    <property type="match status" value="1"/>
</dbReference>
<dbReference type="Pfam" id="PF08780">
    <property type="entry name" value="NTase_sub_bind"/>
    <property type="match status" value="1"/>
</dbReference>
<dbReference type="SUPFAM" id="SSF81593">
    <property type="entry name" value="Nucleotidyltransferase substrate binding subunit/domain"/>
    <property type="match status" value="1"/>
</dbReference>